<name>CLPX_TROWT</name>
<dbReference type="EMBL" id="AE014184">
    <property type="protein sequence ID" value="AAO44576.1"/>
    <property type="molecule type" value="Genomic_DNA"/>
</dbReference>
<dbReference type="RefSeq" id="WP_011102601.1">
    <property type="nucleotide sequence ID" value="NC_004572.3"/>
</dbReference>
<dbReference type="SMR" id="Q83G50"/>
<dbReference type="STRING" id="203267.TWT_479"/>
<dbReference type="KEGG" id="twh:TWT_479"/>
<dbReference type="eggNOG" id="COG1219">
    <property type="taxonomic scope" value="Bacteria"/>
</dbReference>
<dbReference type="HOGENOM" id="CLU_014218_8_2_11"/>
<dbReference type="OrthoDB" id="9804062at2"/>
<dbReference type="Proteomes" id="UP000002200">
    <property type="component" value="Chromosome"/>
</dbReference>
<dbReference type="GO" id="GO:0009376">
    <property type="term" value="C:HslUV protease complex"/>
    <property type="evidence" value="ECO:0007669"/>
    <property type="project" value="TreeGrafter"/>
</dbReference>
<dbReference type="GO" id="GO:0005524">
    <property type="term" value="F:ATP binding"/>
    <property type="evidence" value="ECO:0007669"/>
    <property type="project" value="UniProtKB-UniRule"/>
</dbReference>
<dbReference type="GO" id="GO:0016887">
    <property type="term" value="F:ATP hydrolysis activity"/>
    <property type="evidence" value="ECO:0007669"/>
    <property type="project" value="InterPro"/>
</dbReference>
<dbReference type="GO" id="GO:0140662">
    <property type="term" value="F:ATP-dependent protein folding chaperone"/>
    <property type="evidence" value="ECO:0007669"/>
    <property type="project" value="InterPro"/>
</dbReference>
<dbReference type="GO" id="GO:0046983">
    <property type="term" value="F:protein dimerization activity"/>
    <property type="evidence" value="ECO:0007669"/>
    <property type="project" value="InterPro"/>
</dbReference>
<dbReference type="GO" id="GO:0051082">
    <property type="term" value="F:unfolded protein binding"/>
    <property type="evidence" value="ECO:0007669"/>
    <property type="project" value="UniProtKB-UniRule"/>
</dbReference>
<dbReference type="GO" id="GO:0008270">
    <property type="term" value="F:zinc ion binding"/>
    <property type="evidence" value="ECO:0007669"/>
    <property type="project" value="InterPro"/>
</dbReference>
<dbReference type="GO" id="GO:0051301">
    <property type="term" value="P:cell division"/>
    <property type="evidence" value="ECO:0007669"/>
    <property type="project" value="TreeGrafter"/>
</dbReference>
<dbReference type="GO" id="GO:0051603">
    <property type="term" value="P:proteolysis involved in protein catabolic process"/>
    <property type="evidence" value="ECO:0007669"/>
    <property type="project" value="TreeGrafter"/>
</dbReference>
<dbReference type="CDD" id="cd19497">
    <property type="entry name" value="RecA-like_ClpX"/>
    <property type="match status" value="1"/>
</dbReference>
<dbReference type="FunFam" id="1.10.8.60:FF:000002">
    <property type="entry name" value="ATP-dependent Clp protease ATP-binding subunit ClpX"/>
    <property type="match status" value="1"/>
</dbReference>
<dbReference type="FunFam" id="3.40.50.300:FF:000005">
    <property type="entry name" value="ATP-dependent Clp protease ATP-binding subunit ClpX"/>
    <property type="match status" value="1"/>
</dbReference>
<dbReference type="Gene3D" id="1.10.8.60">
    <property type="match status" value="1"/>
</dbReference>
<dbReference type="Gene3D" id="6.20.220.10">
    <property type="entry name" value="ClpX chaperone, C4-type zinc finger domain"/>
    <property type="match status" value="1"/>
</dbReference>
<dbReference type="Gene3D" id="3.40.50.300">
    <property type="entry name" value="P-loop containing nucleotide triphosphate hydrolases"/>
    <property type="match status" value="1"/>
</dbReference>
<dbReference type="HAMAP" id="MF_00175">
    <property type="entry name" value="ClpX"/>
    <property type="match status" value="1"/>
</dbReference>
<dbReference type="InterPro" id="IPR003593">
    <property type="entry name" value="AAA+_ATPase"/>
</dbReference>
<dbReference type="InterPro" id="IPR050052">
    <property type="entry name" value="ATP-dep_Clp_protease_ClpX"/>
</dbReference>
<dbReference type="InterPro" id="IPR003959">
    <property type="entry name" value="ATPase_AAA_core"/>
</dbReference>
<dbReference type="InterPro" id="IPR019489">
    <property type="entry name" value="Clp_ATPase_C"/>
</dbReference>
<dbReference type="InterPro" id="IPR004487">
    <property type="entry name" value="Clp_protease_ATP-bd_su_ClpX"/>
</dbReference>
<dbReference type="InterPro" id="IPR046425">
    <property type="entry name" value="ClpX_bact"/>
</dbReference>
<dbReference type="InterPro" id="IPR027417">
    <property type="entry name" value="P-loop_NTPase"/>
</dbReference>
<dbReference type="InterPro" id="IPR010603">
    <property type="entry name" value="Znf_CppX_C4"/>
</dbReference>
<dbReference type="InterPro" id="IPR038366">
    <property type="entry name" value="Znf_CppX_C4_sf"/>
</dbReference>
<dbReference type="NCBIfam" id="TIGR00382">
    <property type="entry name" value="clpX"/>
    <property type="match status" value="1"/>
</dbReference>
<dbReference type="NCBIfam" id="NF003745">
    <property type="entry name" value="PRK05342.1"/>
    <property type="match status" value="1"/>
</dbReference>
<dbReference type="PANTHER" id="PTHR48102:SF7">
    <property type="entry name" value="ATP-DEPENDENT CLP PROTEASE ATP-BINDING SUBUNIT CLPX-LIKE, MITOCHONDRIAL"/>
    <property type="match status" value="1"/>
</dbReference>
<dbReference type="PANTHER" id="PTHR48102">
    <property type="entry name" value="ATP-DEPENDENT CLP PROTEASE ATP-BINDING SUBUNIT CLPX-LIKE, MITOCHONDRIAL-RELATED"/>
    <property type="match status" value="1"/>
</dbReference>
<dbReference type="Pfam" id="PF07724">
    <property type="entry name" value="AAA_2"/>
    <property type="match status" value="1"/>
</dbReference>
<dbReference type="Pfam" id="PF10431">
    <property type="entry name" value="ClpB_D2-small"/>
    <property type="match status" value="1"/>
</dbReference>
<dbReference type="Pfam" id="PF06689">
    <property type="entry name" value="zf-C4_ClpX"/>
    <property type="match status" value="1"/>
</dbReference>
<dbReference type="SMART" id="SM00382">
    <property type="entry name" value="AAA"/>
    <property type="match status" value="1"/>
</dbReference>
<dbReference type="SMART" id="SM01086">
    <property type="entry name" value="ClpB_D2-small"/>
    <property type="match status" value="1"/>
</dbReference>
<dbReference type="SMART" id="SM00994">
    <property type="entry name" value="zf-C4_ClpX"/>
    <property type="match status" value="1"/>
</dbReference>
<dbReference type="SUPFAM" id="SSF57716">
    <property type="entry name" value="Glucocorticoid receptor-like (DNA-binding domain)"/>
    <property type="match status" value="1"/>
</dbReference>
<dbReference type="SUPFAM" id="SSF52540">
    <property type="entry name" value="P-loop containing nucleoside triphosphate hydrolases"/>
    <property type="match status" value="1"/>
</dbReference>
<dbReference type="PROSITE" id="PS51902">
    <property type="entry name" value="CLPX_ZB"/>
    <property type="match status" value="1"/>
</dbReference>
<sequence length="423" mass="46591">MTDDTEYRCSFCGKEHHQVDDLIAGPDVRICSECVVLSCEIVEDRRNEALAKQDAFIKRKQRSVLEGLPKPAEIYAFLDEYVIGQQKAKRDLSVAVYNHYKRLVSTKSESENEVELSKSNILLIGPTGCGKTYLAQTLARMLRVPFAVADATALTEAGYVGDDVENVLLKLLQDADFDITRAEAGIVCIDEIDKISRKADSPSITRDVSGEGVQQALLKILEGTVASVPLQGGKKHTQYEQASINTRNILFIVAGAFSGIEEIISSRIGRSNMGFGSDLLRKDTDVFDQILPEDLRKFGLIPEFIGRLPIVTAISHLDGEDMIRVLTEPKNALVKQYKRLFSLDGVSLGFDHEALEAIVELALKRKTGARALRSVMESILSPIMFDVPSRGDIESVRITAETVAGGGPHLTMRCARSNYIRSA</sequence>
<protein>
    <recommendedName>
        <fullName evidence="1">ATP-dependent Clp protease ATP-binding subunit ClpX</fullName>
    </recommendedName>
</protein>
<accession>Q83G50</accession>
<gene>
    <name evidence="1" type="primary">clpX</name>
    <name type="ordered locus">TWT_479</name>
</gene>
<organism>
    <name type="scientific">Tropheryma whipplei (strain Twist)</name>
    <name type="common">Whipple's bacillus</name>
    <dbReference type="NCBI Taxonomy" id="203267"/>
    <lineage>
        <taxon>Bacteria</taxon>
        <taxon>Bacillati</taxon>
        <taxon>Actinomycetota</taxon>
        <taxon>Actinomycetes</taxon>
        <taxon>Micrococcales</taxon>
        <taxon>Tropherymataceae</taxon>
        <taxon>Tropheryma</taxon>
    </lineage>
</organism>
<evidence type="ECO:0000255" key="1">
    <source>
        <dbReference type="HAMAP-Rule" id="MF_00175"/>
    </source>
</evidence>
<evidence type="ECO:0000255" key="2">
    <source>
        <dbReference type="PROSITE-ProRule" id="PRU01250"/>
    </source>
</evidence>
<keyword id="KW-0067">ATP-binding</keyword>
<keyword id="KW-0143">Chaperone</keyword>
<keyword id="KW-0479">Metal-binding</keyword>
<keyword id="KW-0547">Nucleotide-binding</keyword>
<keyword id="KW-1185">Reference proteome</keyword>
<keyword id="KW-0862">Zinc</keyword>
<feature type="chain" id="PRO_0000160450" description="ATP-dependent Clp protease ATP-binding subunit ClpX">
    <location>
        <begin position="1"/>
        <end position="423"/>
    </location>
</feature>
<feature type="domain" description="ClpX-type ZB" evidence="2">
    <location>
        <begin position="1"/>
        <end position="50"/>
    </location>
</feature>
<feature type="binding site" evidence="2">
    <location>
        <position position="9"/>
    </location>
    <ligand>
        <name>Zn(2+)</name>
        <dbReference type="ChEBI" id="CHEBI:29105"/>
    </ligand>
</feature>
<feature type="binding site" evidence="2">
    <location>
        <position position="12"/>
    </location>
    <ligand>
        <name>Zn(2+)</name>
        <dbReference type="ChEBI" id="CHEBI:29105"/>
    </ligand>
</feature>
<feature type="binding site" evidence="2">
    <location>
        <position position="31"/>
    </location>
    <ligand>
        <name>Zn(2+)</name>
        <dbReference type="ChEBI" id="CHEBI:29105"/>
    </ligand>
</feature>
<feature type="binding site" evidence="2">
    <location>
        <position position="34"/>
    </location>
    <ligand>
        <name>Zn(2+)</name>
        <dbReference type="ChEBI" id="CHEBI:29105"/>
    </ligand>
</feature>
<feature type="binding site" evidence="1">
    <location>
        <begin position="126"/>
        <end position="133"/>
    </location>
    <ligand>
        <name>ATP</name>
        <dbReference type="ChEBI" id="CHEBI:30616"/>
    </ligand>
</feature>
<comment type="function">
    <text evidence="1">ATP-dependent specificity component of the Clp protease. It directs the protease to specific substrates. Can perform chaperone functions in the absence of ClpP.</text>
</comment>
<comment type="subunit">
    <text evidence="1">Component of the ClpX-ClpP complex. Forms a hexameric ring that, in the presence of ATP, binds to fourteen ClpP subunits assembled into a disk-like structure with a central cavity, resembling the structure of eukaryotic proteasomes.</text>
</comment>
<comment type="similarity">
    <text evidence="1">Belongs to the ClpX chaperone family.</text>
</comment>
<proteinExistence type="inferred from homology"/>
<reference key="1">
    <citation type="journal article" date="2003" name="Genome Res.">
        <title>Tropheryma whipplei twist: a human pathogenic Actinobacteria with a reduced genome.</title>
        <authorList>
            <person name="Raoult D."/>
            <person name="Ogata H."/>
            <person name="Audic S."/>
            <person name="Robert C."/>
            <person name="Suhre K."/>
            <person name="Drancourt M."/>
            <person name="Claverie J.-M."/>
        </authorList>
    </citation>
    <scope>NUCLEOTIDE SEQUENCE [LARGE SCALE GENOMIC DNA]</scope>
    <source>
        <strain>Twist</strain>
    </source>
</reference>